<feature type="chain" id="PRO_0000212667" description="Inhibitor of growth protein 4">
    <location>
        <begin position="1"/>
        <end position="248"/>
    </location>
</feature>
<feature type="zinc finger region" description="PHD-type" evidence="6">
    <location>
        <begin position="195"/>
        <end position="244"/>
    </location>
</feature>
<feature type="region of interest" description="Disordered" evidence="7">
    <location>
        <begin position="115"/>
        <end position="160"/>
    </location>
</feature>
<feature type="coiled-coil region" evidence="5">
    <location>
        <begin position="25"/>
        <end position="118"/>
    </location>
</feature>
<feature type="short sequence motif" description="Bipartite nuclear localization signal" evidence="1">
    <location>
        <begin position="127"/>
        <end position="147"/>
    </location>
</feature>
<feature type="binding site" evidence="3">
    <location>
        <position position="198"/>
    </location>
    <ligand>
        <name>Zn(2+)</name>
        <dbReference type="ChEBI" id="CHEBI:29105"/>
        <label>1</label>
    </ligand>
</feature>
<feature type="binding site" evidence="3">
    <location>
        <position position="200"/>
    </location>
    <ligand>
        <name>Zn(2+)</name>
        <dbReference type="ChEBI" id="CHEBI:29105"/>
        <label>1</label>
    </ligand>
</feature>
<feature type="binding site" evidence="3">
    <location>
        <position position="211"/>
    </location>
    <ligand>
        <name>Zn(2+)</name>
        <dbReference type="ChEBI" id="CHEBI:29105"/>
        <label>2</label>
    </ligand>
</feature>
<feature type="binding site" evidence="3">
    <location>
        <position position="216"/>
    </location>
    <ligand>
        <name>Zn(2+)</name>
        <dbReference type="ChEBI" id="CHEBI:29105"/>
        <label>2</label>
    </ligand>
</feature>
<feature type="binding site" evidence="3">
    <location>
        <position position="222"/>
    </location>
    <ligand>
        <name>Zn(2+)</name>
        <dbReference type="ChEBI" id="CHEBI:29105"/>
        <label>1</label>
    </ligand>
</feature>
<feature type="binding site" evidence="3">
    <location>
        <position position="225"/>
    </location>
    <ligand>
        <name>Zn(2+)</name>
        <dbReference type="ChEBI" id="CHEBI:29105"/>
        <label>1</label>
    </ligand>
</feature>
<feature type="binding site" evidence="3">
    <location>
        <position position="238"/>
    </location>
    <ligand>
        <name>Zn(2+)</name>
        <dbReference type="ChEBI" id="CHEBI:29105"/>
        <label>2</label>
    </ligand>
</feature>
<feature type="binding site" evidence="3">
    <location>
        <position position="241"/>
    </location>
    <ligand>
        <name>Zn(2+)</name>
        <dbReference type="ChEBI" id="CHEBI:29105"/>
        <label>2</label>
    </ligand>
</feature>
<feature type="site" description="Histone H3K4me3 binding" evidence="3">
    <location>
        <position position="197"/>
    </location>
</feature>
<feature type="site" description="Histone H3K4me3 binding" evidence="3">
    <location>
        <position position="208"/>
    </location>
</feature>
<feature type="site" description="Histone H3K4me3 binding" evidence="3">
    <location>
        <position position="212"/>
    </location>
</feature>
<feature type="modified residue" description="N6-acetyllysine" evidence="4">
    <location>
        <position position="112"/>
    </location>
</feature>
<feature type="modified residue" description="N6-acetyllysine" evidence="4">
    <location>
        <position position="127"/>
    </location>
</feature>
<feature type="modified residue" description="N6-acetyllysine" evidence="2">
    <location>
        <position position="129"/>
    </location>
</feature>
<feature type="modified residue" description="Citrulline" evidence="1">
    <location>
        <position position="132"/>
    </location>
</feature>
<feature type="modified residue" description="N6-acetyllysine" evidence="4">
    <location>
        <position position="145"/>
    </location>
</feature>
<feature type="modified residue" description="N6-acetyllysine" evidence="4">
    <location>
        <position position="147"/>
    </location>
</feature>
<feature type="modified residue" description="N6-acetyllysine" evidence="4">
    <location>
        <position position="155"/>
    </location>
</feature>
<feature type="modified residue" description="Citrulline" evidence="1">
    <location>
        <position position="165"/>
    </location>
</feature>
<comment type="function">
    <text evidence="2 4">Component of HBO1 complexes, which specifically mediate acetylation of histone H3 at 'Lys-14' (H3K14ac), and have reduced activity toward histone H4. Through chromatin acetylation it may function in DNA replication. May inhibit tumor progression by modulating the transcriptional output of signaling pathways which regulate cell proliferation. Can suppress brain tumor angiogenesis through transcriptional repression of RELA/NFKB3 target genes when complexed with RELA. May also specifically suppress loss of contact inhibition elicited by activated oncogenes such as MYC. Represses hypoxia inducible factor's (HIF) activity by interacting with HIF prolyl hydroxylase 2 (EGLN1) (By similarity). Can enhance apoptosis induced by serum starvation in mammary epithelial cell line HC11 (By similarity).</text>
</comment>
<comment type="subunit">
    <text evidence="2 4">Homodimer. Component of the HBO1 complex composed of KAT7/HBO1, MEAF6, ING4 or ING5, and one scaffold subunit: complexes containing BRPF scaffold (BRPF1, BRD1/BRPF2 or BRPF3) direct KAT7/HBO1 specificity towards H3K14ac, while complexes containing JADE scaffold (JADE1, JADE2 and JADE3) mediate acetylation of histone H4. Interacts with H3K4me3 and to a lesser extent with H3K4me2, the interaction augments KAT7/HBO1 acetylation activity on H3 tails. Interacts with EP300, RELA and TP53; these interactions may be indirect. Interacts with EGLN1 (By similarity). Interacts with BCL2A1 (By similarity).</text>
</comment>
<comment type="subcellular location">
    <subcellularLocation>
        <location evidence="4">Nucleus</location>
    </subcellularLocation>
</comment>
<comment type="domain">
    <text evidence="4">The PHD-type zinc finger mediates the binding to H3K4me3.</text>
</comment>
<comment type="domain">
    <text evidence="4">The N-terminal coiled-coil domain mediates homodimerization.</text>
</comment>
<comment type="PTM">
    <text evidence="4">Citrullination by PADI4 within the nuclear localization signal disrupts the interaction with p53 and increases susceptibility to degradation.</text>
</comment>
<comment type="similarity">
    <text evidence="8">Belongs to the ING family.</text>
</comment>
<comment type="caution">
    <text evidence="8">Lacks the Trp (here Arg-220), a conserved feature of the aromatic cage required for the interaction with histone H3K4me3/2.</text>
</comment>
<accession>Q3T095</accession>
<proteinExistence type="evidence at transcript level"/>
<sequence length="248" mass="28429">MAAGMYLEHYLDSIENLPFELQRNFQLMRDLDQRTEDLKAEIDKLASEYMSSARSRSSEEKLALLRQIQEAYGKCKEFGDDKVQLAMQTYEMVDKHIRRLDTDLARFEADLKEKQIESSDYDSSSSKGKKSRTQKEKKAARARSKGKNSDEEAPKAAQKKLKLVRTSPEYGMPSVTFGSVHPSDVLDMPVDPNEPTYCLCHQVSYGEMIGCDNPDCSIERFHFACVGLTTKPRGKWFCPRCSQERKKK</sequence>
<evidence type="ECO:0000250" key="1"/>
<evidence type="ECO:0000250" key="2">
    <source>
        <dbReference type="UniProtKB" id="Q8C0D7"/>
    </source>
</evidence>
<evidence type="ECO:0000250" key="3">
    <source>
        <dbReference type="UniProtKB" id="Q9UK53"/>
    </source>
</evidence>
<evidence type="ECO:0000250" key="4">
    <source>
        <dbReference type="UniProtKB" id="Q9UNL4"/>
    </source>
</evidence>
<evidence type="ECO:0000255" key="5"/>
<evidence type="ECO:0000255" key="6">
    <source>
        <dbReference type="PROSITE-ProRule" id="PRU00146"/>
    </source>
</evidence>
<evidence type="ECO:0000256" key="7">
    <source>
        <dbReference type="SAM" id="MobiDB-lite"/>
    </source>
</evidence>
<evidence type="ECO:0000305" key="8"/>
<name>ING4_BOVIN</name>
<organism>
    <name type="scientific">Bos taurus</name>
    <name type="common">Bovine</name>
    <dbReference type="NCBI Taxonomy" id="9913"/>
    <lineage>
        <taxon>Eukaryota</taxon>
        <taxon>Metazoa</taxon>
        <taxon>Chordata</taxon>
        <taxon>Craniata</taxon>
        <taxon>Vertebrata</taxon>
        <taxon>Euteleostomi</taxon>
        <taxon>Mammalia</taxon>
        <taxon>Eutheria</taxon>
        <taxon>Laurasiatheria</taxon>
        <taxon>Artiodactyla</taxon>
        <taxon>Ruminantia</taxon>
        <taxon>Pecora</taxon>
        <taxon>Bovidae</taxon>
        <taxon>Bovinae</taxon>
        <taxon>Bos</taxon>
    </lineage>
</organism>
<gene>
    <name type="primary">ING4</name>
</gene>
<protein>
    <recommendedName>
        <fullName>Inhibitor of growth protein 4</fullName>
    </recommendedName>
    <alternativeName>
        <fullName>p29ING4</fullName>
    </alternativeName>
</protein>
<reference key="1">
    <citation type="submission" date="2005-08" db="EMBL/GenBank/DDBJ databases">
        <authorList>
            <consortium name="NIH - Mammalian Gene Collection (MGC) project"/>
        </authorList>
    </citation>
    <scope>NUCLEOTIDE SEQUENCE [LARGE SCALE MRNA]</scope>
    <source>
        <strain>Crossbred X Angus</strain>
        <tissue>Ileum</tissue>
    </source>
</reference>
<dbReference type="EMBL" id="BC102494">
    <property type="protein sequence ID" value="AAI02495.1"/>
    <property type="molecule type" value="mRNA"/>
</dbReference>
<dbReference type="RefSeq" id="NP_001030466.1">
    <property type="nucleotide sequence ID" value="NM_001035389.2"/>
</dbReference>
<dbReference type="BMRB" id="Q3T095"/>
<dbReference type="SMR" id="Q3T095"/>
<dbReference type="FunCoup" id="Q3T095">
    <property type="interactions" value="1457"/>
</dbReference>
<dbReference type="STRING" id="9913.ENSBTAP00000022686"/>
<dbReference type="PaxDb" id="9913-ENSBTAP00000022686"/>
<dbReference type="GeneID" id="532483"/>
<dbReference type="KEGG" id="bta:532483"/>
<dbReference type="CTD" id="51147"/>
<dbReference type="eggNOG" id="KOG1973">
    <property type="taxonomic scope" value="Eukaryota"/>
</dbReference>
<dbReference type="InParanoid" id="Q3T095"/>
<dbReference type="OrthoDB" id="5411773at2759"/>
<dbReference type="Proteomes" id="UP000009136">
    <property type="component" value="Unplaced"/>
</dbReference>
<dbReference type="GO" id="GO:0000123">
    <property type="term" value="C:histone acetyltransferase complex"/>
    <property type="evidence" value="ECO:0000250"/>
    <property type="project" value="UniProtKB"/>
</dbReference>
<dbReference type="GO" id="GO:0005634">
    <property type="term" value="C:nucleus"/>
    <property type="evidence" value="ECO:0000250"/>
    <property type="project" value="UniProtKB"/>
</dbReference>
<dbReference type="GO" id="GO:0035064">
    <property type="term" value="F:methylated histone binding"/>
    <property type="evidence" value="ECO:0000318"/>
    <property type="project" value="GO_Central"/>
</dbReference>
<dbReference type="GO" id="GO:0003713">
    <property type="term" value="F:transcription coactivator activity"/>
    <property type="evidence" value="ECO:0000250"/>
    <property type="project" value="UniProtKB"/>
</dbReference>
<dbReference type="GO" id="GO:0008270">
    <property type="term" value="F:zinc ion binding"/>
    <property type="evidence" value="ECO:0007669"/>
    <property type="project" value="UniProtKB-KW"/>
</dbReference>
<dbReference type="GO" id="GO:0006915">
    <property type="term" value="P:apoptotic process"/>
    <property type="evidence" value="ECO:0007669"/>
    <property type="project" value="UniProtKB-KW"/>
</dbReference>
<dbReference type="GO" id="GO:0006338">
    <property type="term" value="P:chromatin remodeling"/>
    <property type="evidence" value="ECO:0007669"/>
    <property type="project" value="GOC"/>
</dbReference>
<dbReference type="GO" id="GO:0043065">
    <property type="term" value="P:positive regulation of apoptotic process"/>
    <property type="evidence" value="ECO:0000250"/>
    <property type="project" value="UniProtKB"/>
</dbReference>
<dbReference type="GO" id="GO:0006355">
    <property type="term" value="P:regulation of DNA-templated transcription"/>
    <property type="evidence" value="ECO:0000318"/>
    <property type="project" value="GO_Central"/>
</dbReference>
<dbReference type="CDD" id="cd16862">
    <property type="entry name" value="ING_ING4"/>
    <property type="match status" value="1"/>
</dbReference>
<dbReference type="CDD" id="cd15684">
    <property type="entry name" value="PHD_ING4"/>
    <property type="match status" value="1"/>
</dbReference>
<dbReference type="FunFam" id="3.30.40.10:FF:000016">
    <property type="entry name" value="Inhibitor of growth protein"/>
    <property type="match status" value="1"/>
</dbReference>
<dbReference type="Gene3D" id="6.10.140.1740">
    <property type="match status" value="1"/>
</dbReference>
<dbReference type="Gene3D" id="3.30.40.10">
    <property type="entry name" value="Zinc/RING finger domain, C3HC4 (zinc finger)"/>
    <property type="match status" value="1"/>
</dbReference>
<dbReference type="InterPro" id="IPR028651">
    <property type="entry name" value="ING_fam"/>
</dbReference>
<dbReference type="InterPro" id="IPR024610">
    <property type="entry name" value="ING_N_histone-binding"/>
</dbReference>
<dbReference type="InterPro" id="IPR019786">
    <property type="entry name" value="Zinc_finger_PHD-type_CS"/>
</dbReference>
<dbReference type="InterPro" id="IPR011011">
    <property type="entry name" value="Znf_FYVE_PHD"/>
</dbReference>
<dbReference type="InterPro" id="IPR001965">
    <property type="entry name" value="Znf_PHD"/>
</dbReference>
<dbReference type="InterPro" id="IPR019787">
    <property type="entry name" value="Znf_PHD-finger"/>
</dbReference>
<dbReference type="InterPro" id="IPR013083">
    <property type="entry name" value="Znf_RING/FYVE/PHD"/>
</dbReference>
<dbReference type="PANTHER" id="PTHR10333">
    <property type="entry name" value="INHIBITOR OF GROWTH PROTEIN"/>
    <property type="match status" value="1"/>
</dbReference>
<dbReference type="PANTHER" id="PTHR10333:SF106">
    <property type="entry name" value="INHIBITOR OF GROWTH PROTEIN 4"/>
    <property type="match status" value="1"/>
</dbReference>
<dbReference type="Pfam" id="PF12998">
    <property type="entry name" value="ING"/>
    <property type="match status" value="1"/>
</dbReference>
<dbReference type="SMART" id="SM01408">
    <property type="entry name" value="ING"/>
    <property type="match status" value="1"/>
</dbReference>
<dbReference type="SMART" id="SM00249">
    <property type="entry name" value="PHD"/>
    <property type="match status" value="1"/>
</dbReference>
<dbReference type="SUPFAM" id="SSF57903">
    <property type="entry name" value="FYVE/PHD zinc finger"/>
    <property type="match status" value="1"/>
</dbReference>
<dbReference type="PROSITE" id="PS01359">
    <property type="entry name" value="ZF_PHD_1"/>
    <property type="match status" value="1"/>
</dbReference>
<dbReference type="PROSITE" id="PS50016">
    <property type="entry name" value="ZF_PHD_2"/>
    <property type="match status" value="1"/>
</dbReference>
<keyword id="KW-0007">Acetylation</keyword>
<keyword id="KW-0053">Apoptosis</keyword>
<keyword id="KW-0131">Cell cycle</keyword>
<keyword id="KW-0156">Chromatin regulator</keyword>
<keyword id="KW-0164">Citrullination</keyword>
<keyword id="KW-0175">Coiled coil</keyword>
<keyword id="KW-0479">Metal-binding</keyword>
<keyword id="KW-0539">Nucleus</keyword>
<keyword id="KW-1185">Reference proteome</keyword>
<keyword id="KW-0043">Tumor suppressor</keyword>
<keyword id="KW-0862">Zinc</keyword>
<keyword id="KW-0863">Zinc-finger</keyword>